<sequence length="175" mass="21086">MGKITFFEDRSFQGRCYECSSDCPNLQTYFSRCNSVRVDSGCWMLYERPNYQGHQYFLRRGEYPDYQQWMGFSDSIRSCCLIPQHSGTYRMRIYEKDDFRGQMSEITDDCLSLQDRFHFSEIHSLNVMEGCWVLYEMPSYRGRQYLLRPGEYRRYLDWGAANAKVGSFRRVMDFY</sequence>
<comment type="function">
    <text>Crystallins are the dominant structural components of the vertebrate eye lens.</text>
</comment>
<comment type="domain">
    <text>Has a two-domain beta-structure, folded into four very similar Greek key motifs.</text>
</comment>
<comment type="miscellaneous">
    <text>There are six different gamma crystallins identified in mouse lens.</text>
</comment>
<comment type="similarity">
    <text evidence="2">Belongs to the beta/gamma-crystallin family.</text>
</comment>
<keyword id="KW-0273">Eye lens protein</keyword>
<keyword id="KW-1185">Reference proteome</keyword>
<keyword id="KW-0677">Repeat</keyword>
<gene>
    <name type="primary">Crygb</name>
</gene>
<reference key="1">
    <citation type="journal article" date="1993" name="Gene">
        <title>Genomic sequences of murine gamma B- and gamma C-crystallin-encoding genes: promoter analysis and complete evolutionary pattern of mouse, rat and human gamma-crystallins.</title>
        <authorList>
            <person name="Graw J."/>
            <person name="Liebstein A."/>
            <person name="Pietrowski D."/>
            <person name="Schmitt-John T."/>
            <person name="Werner T."/>
        </authorList>
    </citation>
    <scope>NUCLEOTIDE SEQUENCE [GENOMIC DNA]</scope>
    <source>
        <strain>102 X C3H</strain>
        <tissue>Liver</tissue>
    </source>
</reference>
<reference key="2">
    <citation type="submission" date="2007-02" db="EMBL/GenBank/DDBJ databases">
        <title>Mouse gammaB-crystallin.</title>
        <authorList>
            <person name="Wistow G."/>
        </authorList>
    </citation>
    <scope>NUCLEOTIDE SEQUENCE [MRNA]</scope>
    <source>
        <strain>C57BL/6J</strain>
        <tissue>Lens</tissue>
    </source>
</reference>
<reference key="3">
    <citation type="journal article" date="2005" name="Science">
        <title>The transcriptional landscape of the mammalian genome.</title>
        <authorList>
            <person name="Carninci P."/>
            <person name="Kasukawa T."/>
            <person name="Katayama S."/>
            <person name="Gough J."/>
            <person name="Frith M.C."/>
            <person name="Maeda N."/>
            <person name="Oyama R."/>
            <person name="Ravasi T."/>
            <person name="Lenhard B."/>
            <person name="Wells C."/>
            <person name="Kodzius R."/>
            <person name="Shimokawa K."/>
            <person name="Bajic V.B."/>
            <person name="Brenner S.E."/>
            <person name="Batalov S."/>
            <person name="Forrest A.R."/>
            <person name="Zavolan M."/>
            <person name="Davis M.J."/>
            <person name="Wilming L.G."/>
            <person name="Aidinis V."/>
            <person name="Allen J.E."/>
            <person name="Ambesi-Impiombato A."/>
            <person name="Apweiler R."/>
            <person name="Aturaliya R.N."/>
            <person name="Bailey T.L."/>
            <person name="Bansal M."/>
            <person name="Baxter L."/>
            <person name="Beisel K.W."/>
            <person name="Bersano T."/>
            <person name="Bono H."/>
            <person name="Chalk A.M."/>
            <person name="Chiu K.P."/>
            <person name="Choudhary V."/>
            <person name="Christoffels A."/>
            <person name="Clutterbuck D.R."/>
            <person name="Crowe M.L."/>
            <person name="Dalla E."/>
            <person name="Dalrymple B.P."/>
            <person name="de Bono B."/>
            <person name="Della Gatta G."/>
            <person name="di Bernardo D."/>
            <person name="Down T."/>
            <person name="Engstrom P."/>
            <person name="Fagiolini M."/>
            <person name="Faulkner G."/>
            <person name="Fletcher C.F."/>
            <person name="Fukushima T."/>
            <person name="Furuno M."/>
            <person name="Futaki S."/>
            <person name="Gariboldi M."/>
            <person name="Georgii-Hemming P."/>
            <person name="Gingeras T.R."/>
            <person name="Gojobori T."/>
            <person name="Green R.E."/>
            <person name="Gustincich S."/>
            <person name="Harbers M."/>
            <person name="Hayashi Y."/>
            <person name="Hensch T.K."/>
            <person name="Hirokawa N."/>
            <person name="Hill D."/>
            <person name="Huminiecki L."/>
            <person name="Iacono M."/>
            <person name="Ikeo K."/>
            <person name="Iwama A."/>
            <person name="Ishikawa T."/>
            <person name="Jakt M."/>
            <person name="Kanapin A."/>
            <person name="Katoh M."/>
            <person name="Kawasawa Y."/>
            <person name="Kelso J."/>
            <person name="Kitamura H."/>
            <person name="Kitano H."/>
            <person name="Kollias G."/>
            <person name="Krishnan S.P."/>
            <person name="Kruger A."/>
            <person name="Kummerfeld S.K."/>
            <person name="Kurochkin I.V."/>
            <person name="Lareau L.F."/>
            <person name="Lazarevic D."/>
            <person name="Lipovich L."/>
            <person name="Liu J."/>
            <person name="Liuni S."/>
            <person name="McWilliam S."/>
            <person name="Madan Babu M."/>
            <person name="Madera M."/>
            <person name="Marchionni L."/>
            <person name="Matsuda H."/>
            <person name="Matsuzawa S."/>
            <person name="Miki H."/>
            <person name="Mignone F."/>
            <person name="Miyake S."/>
            <person name="Morris K."/>
            <person name="Mottagui-Tabar S."/>
            <person name="Mulder N."/>
            <person name="Nakano N."/>
            <person name="Nakauchi H."/>
            <person name="Ng P."/>
            <person name="Nilsson R."/>
            <person name="Nishiguchi S."/>
            <person name="Nishikawa S."/>
            <person name="Nori F."/>
            <person name="Ohara O."/>
            <person name="Okazaki Y."/>
            <person name="Orlando V."/>
            <person name="Pang K.C."/>
            <person name="Pavan W.J."/>
            <person name="Pavesi G."/>
            <person name="Pesole G."/>
            <person name="Petrovsky N."/>
            <person name="Piazza S."/>
            <person name="Reed J."/>
            <person name="Reid J.F."/>
            <person name="Ring B.Z."/>
            <person name="Ringwald M."/>
            <person name="Rost B."/>
            <person name="Ruan Y."/>
            <person name="Salzberg S.L."/>
            <person name="Sandelin A."/>
            <person name="Schneider C."/>
            <person name="Schoenbach C."/>
            <person name="Sekiguchi K."/>
            <person name="Semple C.A."/>
            <person name="Seno S."/>
            <person name="Sessa L."/>
            <person name="Sheng Y."/>
            <person name="Shibata Y."/>
            <person name="Shimada H."/>
            <person name="Shimada K."/>
            <person name="Silva D."/>
            <person name="Sinclair B."/>
            <person name="Sperling S."/>
            <person name="Stupka E."/>
            <person name="Sugiura K."/>
            <person name="Sultana R."/>
            <person name="Takenaka Y."/>
            <person name="Taki K."/>
            <person name="Tammoja K."/>
            <person name="Tan S.L."/>
            <person name="Tang S."/>
            <person name="Taylor M.S."/>
            <person name="Tegner J."/>
            <person name="Teichmann S.A."/>
            <person name="Ueda H.R."/>
            <person name="van Nimwegen E."/>
            <person name="Verardo R."/>
            <person name="Wei C.L."/>
            <person name="Yagi K."/>
            <person name="Yamanishi H."/>
            <person name="Zabarovsky E."/>
            <person name="Zhu S."/>
            <person name="Zimmer A."/>
            <person name="Hide W."/>
            <person name="Bult C."/>
            <person name="Grimmond S.M."/>
            <person name="Teasdale R.D."/>
            <person name="Liu E.T."/>
            <person name="Brusic V."/>
            <person name="Quackenbush J."/>
            <person name="Wahlestedt C."/>
            <person name="Mattick J.S."/>
            <person name="Hume D.A."/>
            <person name="Kai C."/>
            <person name="Sasaki D."/>
            <person name="Tomaru Y."/>
            <person name="Fukuda S."/>
            <person name="Kanamori-Katayama M."/>
            <person name="Suzuki M."/>
            <person name="Aoki J."/>
            <person name="Arakawa T."/>
            <person name="Iida J."/>
            <person name="Imamura K."/>
            <person name="Itoh M."/>
            <person name="Kato T."/>
            <person name="Kawaji H."/>
            <person name="Kawagashira N."/>
            <person name="Kawashima T."/>
            <person name="Kojima M."/>
            <person name="Kondo S."/>
            <person name="Konno H."/>
            <person name="Nakano K."/>
            <person name="Ninomiya N."/>
            <person name="Nishio T."/>
            <person name="Okada M."/>
            <person name="Plessy C."/>
            <person name="Shibata K."/>
            <person name="Shiraki T."/>
            <person name="Suzuki S."/>
            <person name="Tagami M."/>
            <person name="Waki K."/>
            <person name="Watahiki A."/>
            <person name="Okamura-Oho Y."/>
            <person name="Suzuki H."/>
            <person name="Kawai J."/>
            <person name="Hayashizaki Y."/>
        </authorList>
    </citation>
    <scope>NUCLEOTIDE SEQUENCE [LARGE SCALE MRNA]</scope>
    <source>
        <strain>C57BL/6J</strain>
        <tissue>Eye</tissue>
    </source>
</reference>
<reference key="4">
    <citation type="journal article" date="2009" name="PLoS Biol.">
        <title>Lineage-specific biology revealed by a finished genome assembly of the mouse.</title>
        <authorList>
            <person name="Church D.M."/>
            <person name="Goodstadt L."/>
            <person name="Hillier L.W."/>
            <person name="Zody M.C."/>
            <person name="Goldstein S."/>
            <person name="She X."/>
            <person name="Bult C.J."/>
            <person name="Agarwala R."/>
            <person name="Cherry J.L."/>
            <person name="DiCuccio M."/>
            <person name="Hlavina W."/>
            <person name="Kapustin Y."/>
            <person name="Meric P."/>
            <person name="Maglott D."/>
            <person name="Birtle Z."/>
            <person name="Marques A.C."/>
            <person name="Graves T."/>
            <person name="Zhou S."/>
            <person name="Teague B."/>
            <person name="Potamousis K."/>
            <person name="Churas C."/>
            <person name="Place M."/>
            <person name="Herschleb J."/>
            <person name="Runnheim R."/>
            <person name="Forrest D."/>
            <person name="Amos-Landgraf J."/>
            <person name="Schwartz D.C."/>
            <person name="Cheng Z."/>
            <person name="Lindblad-Toh K."/>
            <person name="Eichler E.E."/>
            <person name="Ponting C.P."/>
        </authorList>
    </citation>
    <scope>NUCLEOTIDE SEQUENCE [LARGE SCALE GENOMIC DNA]</scope>
    <source>
        <strain>C57BL/6J</strain>
    </source>
</reference>
<reference key="5">
    <citation type="journal article" date="2004" name="Genome Res.">
        <title>The status, quality, and expansion of the NIH full-length cDNA project: the Mammalian Gene Collection (MGC).</title>
        <authorList>
            <consortium name="The MGC Project Team"/>
        </authorList>
    </citation>
    <scope>NUCLEOTIDE SEQUENCE [LARGE SCALE MRNA]</scope>
    <source>
        <strain>C57BL/6J</strain>
        <tissue>Brain</tissue>
    </source>
</reference>
<reference key="6">
    <citation type="journal article" date="1984" name="Proc. Natl. Acad. Sci. U.S.A.">
        <title>Gamma-crystallin family of the mouse lens: structural and evolutionary relationships.</title>
        <authorList>
            <person name="Breitman M.L."/>
            <person name="Lok S."/>
            <person name="Wistow G."/>
            <person name="Piatigorsky J."/>
            <person name="Treton J.A."/>
            <person name="Gold R.J.M."/>
            <person name="Tsui L.-C."/>
        </authorList>
    </citation>
    <scope>NUCLEOTIDE SEQUENCE [MRNA] OF 38-175</scope>
</reference>
<protein>
    <recommendedName>
        <fullName>Gamma-crystallin B</fullName>
    </recommendedName>
    <alternativeName>
        <fullName>Gamma-B-crystallin</fullName>
    </alternativeName>
    <alternativeName>
        <fullName>Gamma-crystallin 3</fullName>
    </alternativeName>
</protein>
<evidence type="ECO:0000255" key="1">
    <source>
        <dbReference type="PROSITE-ProRule" id="PRU00028"/>
    </source>
</evidence>
<evidence type="ECO:0000305" key="2"/>
<accession>P04344</accession>
<accession>Q61593</accession>
<accession>Q6PHP7</accession>
<organism>
    <name type="scientific">Mus musculus</name>
    <name type="common">Mouse</name>
    <dbReference type="NCBI Taxonomy" id="10090"/>
    <lineage>
        <taxon>Eukaryota</taxon>
        <taxon>Metazoa</taxon>
        <taxon>Chordata</taxon>
        <taxon>Craniata</taxon>
        <taxon>Vertebrata</taxon>
        <taxon>Euteleostomi</taxon>
        <taxon>Mammalia</taxon>
        <taxon>Eutheria</taxon>
        <taxon>Euarchontoglires</taxon>
        <taxon>Glires</taxon>
        <taxon>Rodentia</taxon>
        <taxon>Myomorpha</taxon>
        <taxon>Muroidea</taxon>
        <taxon>Muridae</taxon>
        <taxon>Murinae</taxon>
        <taxon>Mus</taxon>
        <taxon>Mus</taxon>
    </lineage>
</organism>
<dbReference type="EMBL" id="Z22573">
    <property type="protein sequence ID" value="CAA80296.1"/>
    <property type="molecule type" value="Genomic_DNA"/>
</dbReference>
<dbReference type="EMBL" id="EF426303">
    <property type="protein sequence ID" value="ABO14688.1"/>
    <property type="molecule type" value="mRNA"/>
</dbReference>
<dbReference type="EMBL" id="AK143110">
    <property type="protein sequence ID" value="BAE25271.1"/>
    <property type="molecule type" value="mRNA"/>
</dbReference>
<dbReference type="EMBL" id="AC101869">
    <property type="status" value="NOT_ANNOTATED_CDS"/>
    <property type="molecule type" value="Genomic_DNA"/>
</dbReference>
<dbReference type="EMBL" id="AC158958">
    <property type="status" value="NOT_ANNOTATED_CDS"/>
    <property type="molecule type" value="Genomic_DNA"/>
</dbReference>
<dbReference type="EMBL" id="BC056455">
    <property type="protein sequence ID" value="AAH56455.1"/>
    <property type="molecule type" value="mRNA"/>
</dbReference>
<dbReference type="EMBL" id="K02585">
    <property type="protein sequence ID" value="AAA37474.1"/>
    <property type="molecule type" value="mRNA"/>
</dbReference>
<dbReference type="CCDS" id="CCDS15013.1"/>
<dbReference type="PIR" id="I48359">
    <property type="entry name" value="CYMSG3"/>
</dbReference>
<dbReference type="RefSeq" id="NP_658906.1">
    <property type="nucleotide sequence ID" value="NM_144761.2"/>
</dbReference>
<dbReference type="SMR" id="P04344"/>
<dbReference type="BioGRID" id="198917">
    <property type="interactions" value="1"/>
</dbReference>
<dbReference type="FunCoup" id="P04344">
    <property type="interactions" value="938"/>
</dbReference>
<dbReference type="STRING" id="10090.ENSMUSP00000027090"/>
<dbReference type="iPTMnet" id="P04344"/>
<dbReference type="PhosphoSitePlus" id="P04344"/>
<dbReference type="PaxDb" id="10090-ENSMUSP00000027090"/>
<dbReference type="ProteomicsDB" id="284012"/>
<dbReference type="Antibodypedia" id="34195">
    <property type="antibodies" value="61 antibodies from 16 providers"/>
</dbReference>
<dbReference type="DNASU" id="12965"/>
<dbReference type="Ensembl" id="ENSMUST00000027090.9">
    <property type="protein sequence ID" value="ENSMUSP00000027090.8"/>
    <property type="gene ID" value="ENSMUSG00000073658.5"/>
</dbReference>
<dbReference type="GeneID" id="12965"/>
<dbReference type="KEGG" id="mmu:12965"/>
<dbReference type="UCSC" id="uc007bhj.2">
    <property type="organism name" value="mouse"/>
</dbReference>
<dbReference type="AGR" id="MGI:88522"/>
<dbReference type="CTD" id="1419"/>
<dbReference type="MGI" id="MGI:88522">
    <property type="gene designation" value="Crygb"/>
</dbReference>
<dbReference type="VEuPathDB" id="HostDB:ENSMUSG00000073658"/>
<dbReference type="eggNOG" id="ENOG502RXJY">
    <property type="taxonomic scope" value="Eukaryota"/>
</dbReference>
<dbReference type="GeneTree" id="ENSGT00940000159232"/>
<dbReference type="HOGENOM" id="CLU_081883_1_1_1"/>
<dbReference type="InParanoid" id="P04344"/>
<dbReference type="OMA" id="IHSLNVM"/>
<dbReference type="OrthoDB" id="8407241at2759"/>
<dbReference type="PhylomeDB" id="P04344"/>
<dbReference type="BioGRID-ORCS" id="12965">
    <property type="hits" value="0 hits in 78 CRISPR screens"/>
</dbReference>
<dbReference type="ChiTaRS" id="Crygb">
    <property type="organism name" value="mouse"/>
</dbReference>
<dbReference type="PRO" id="PR:P04344"/>
<dbReference type="Proteomes" id="UP000000589">
    <property type="component" value="Chromosome 1"/>
</dbReference>
<dbReference type="RNAct" id="P04344">
    <property type="molecule type" value="protein"/>
</dbReference>
<dbReference type="Bgee" id="ENSMUSG00000073658">
    <property type="expression patterns" value="Expressed in lens of camera-type eye and 38 other cell types or tissues"/>
</dbReference>
<dbReference type="GO" id="GO:0005737">
    <property type="term" value="C:cytoplasm"/>
    <property type="evidence" value="ECO:0000314"/>
    <property type="project" value="MGI"/>
</dbReference>
<dbReference type="GO" id="GO:0005634">
    <property type="term" value="C:nucleus"/>
    <property type="evidence" value="ECO:0000314"/>
    <property type="project" value="MGI"/>
</dbReference>
<dbReference type="GO" id="GO:0005212">
    <property type="term" value="F:structural constituent of eye lens"/>
    <property type="evidence" value="ECO:0000314"/>
    <property type="project" value="MGI"/>
</dbReference>
<dbReference type="GO" id="GO:0001654">
    <property type="term" value="P:eye development"/>
    <property type="evidence" value="ECO:0000315"/>
    <property type="project" value="MGI"/>
</dbReference>
<dbReference type="GO" id="GO:0002088">
    <property type="term" value="P:lens development in camera-type eye"/>
    <property type="evidence" value="ECO:0000315"/>
    <property type="project" value="MGI"/>
</dbReference>
<dbReference type="GO" id="GO:0070307">
    <property type="term" value="P:lens fiber cell development"/>
    <property type="evidence" value="ECO:0000315"/>
    <property type="project" value="MGI"/>
</dbReference>
<dbReference type="GO" id="GO:0070309">
    <property type="term" value="P:lens fiber cell morphogenesis"/>
    <property type="evidence" value="ECO:0000315"/>
    <property type="project" value="MGI"/>
</dbReference>
<dbReference type="FunFam" id="2.60.20.10:FF:000001">
    <property type="entry name" value="Crystallin gamma S"/>
    <property type="match status" value="1"/>
</dbReference>
<dbReference type="FunFam" id="2.60.20.10:FF:000003">
    <property type="entry name" value="Crystallin gamma S"/>
    <property type="match status" value="1"/>
</dbReference>
<dbReference type="Gene3D" id="2.60.20.10">
    <property type="entry name" value="Crystallins"/>
    <property type="match status" value="2"/>
</dbReference>
<dbReference type="InterPro" id="IPR050252">
    <property type="entry name" value="Beta/Gamma-Crystallin"/>
</dbReference>
<dbReference type="InterPro" id="IPR001064">
    <property type="entry name" value="Beta/gamma_crystallin"/>
</dbReference>
<dbReference type="InterPro" id="IPR011024">
    <property type="entry name" value="G_crystallin-like"/>
</dbReference>
<dbReference type="PANTHER" id="PTHR11818">
    <property type="entry name" value="BETA/GAMMA CRYSTALLIN"/>
    <property type="match status" value="1"/>
</dbReference>
<dbReference type="PANTHER" id="PTHR11818:SF101">
    <property type="entry name" value="GAMMA-CRYSTALLIN B"/>
    <property type="match status" value="1"/>
</dbReference>
<dbReference type="Pfam" id="PF00030">
    <property type="entry name" value="Crystall"/>
    <property type="match status" value="2"/>
</dbReference>
<dbReference type="PRINTS" id="PR01367">
    <property type="entry name" value="BGCRYSTALLIN"/>
</dbReference>
<dbReference type="SMART" id="SM00247">
    <property type="entry name" value="XTALbg"/>
    <property type="match status" value="2"/>
</dbReference>
<dbReference type="SUPFAM" id="SSF49695">
    <property type="entry name" value="gamma-Crystallin-like"/>
    <property type="match status" value="1"/>
</dbReference>
<dbReference type="PROSITE" id="PS50915">
    <property type="entry name" value="CRYSTALLIN_BETA_GAMMA"/>
    <property type="match status" value="4"/>
</dbReference>
<feature type="chain" id="PRO_0000057596" description="Gamma-crystallin B">
    <location>
        <begin position="1"/>
        <end position="175"/>
    </location>
</feature>
<feature type="domain" description="Beta/gamma crystallin 'Greek key' 1" evidence="1">
    <location>
        <begin position="2"/>
        <end position="40"/>
    </location>
</feature>
<feature type="domain" description="Beta/gamma crystallin 'Greek key' 2" evidence="1">
    <location>
        <begin position="41"/>
        <end position="83"/>
    </location>
</feature>
<feature type="domain" description="Beta/gamma crystallin 'Greek key' 3" evidence="1">
    <location>
        <begin position="89"/>
        <end position="129"/>
    </location>
</feature>
<feature type="domain" description="Beta/gamma crystallin 'Greek key' 4" evidence="1">
    <location>
        <begin position="130"/>
        <end position="172"/>
    </location>
</feature>
<feature type="region of interest" description="Connecting peptide">
    <location>
        <begin position="84"/>
        <end position="88"/>
    </location>
</feature>
<feature type="sequence conflict" description="In Ref. 1; CAA80296 and 6; AAA37474." evidence="2" ref="1 6">
    <original>C</original>
    <variation>R</variation>
    <location>
        <position position="80"/>
    </location>
</feature>
<feature type="sequence conflict" description="In Ref. 6; AAA37474." evidence="2" ref="6">
    <original>E</original>
    <variation>M</variation>
    <location>
        <position position="151"/>
    </location>
</feature>
<proteinExistence type="evidence at transcript level"/>
<name>CRGB_MOUSE</name>